<sequence length="345" mass="38493">MKVAIIGATGYGGIELIRLLEQHPYFSIASLHSFSQVGECITNVYPHFQNVLVHTLQEIDAEEIVKEAEIVFLATPAGVSAELTPKLLAVGLKVIDLSGDFRMKDPFIYEQWYKRAAAKEEILSKAVYGLSEWKRSEVQNANLIANPGCFATAALLATLPLVRSGIIEEDSIIIDAKSGVSGAGKTPTTMTHFPELYDNLRIYKVNEHQHVPEIEQMLAEWNRETKPITFSTHLIPISRGIMVTLYAKVKREMEIEQLQKLYEETYEQSAFVRIRTQGEFPSPKEVRGSNYCDMGIAYDERTGRVTVVSVIDNMMKGAAGQAIQNANIIAGLEETTGLQHMPLYL</sequence>
<dbReference type="EC" id="1.2.1.38" evidence="1"/>
<dbReference type="EMBL" id="AE017194">
    <property type="protein sequence ID" value="AAS43104.1"/>
    <property type="molecule type" value="Genomic_DNA"/>
</dbReference>
<dbReference type="SMR" id="Q731G3"/>
<dbReference type="KEGG" id="bca:BCE_4203"/>
<dbReference type="HOGENOM" id="CLU_006384_0_1_9"/>
<dbReference type="UniPathway" id="UPA00068">
    <property type="reaction ID" value="UER00108"/>
</dbReference>
<dbReference type="Proteomes" id="UP000002527">
    <property type="component" value="Chromosome"/>
</dbReference>
<dbReference type="GO" id="GO:0005737">
    <property type="term" value="C:cytoplasm"/>
    <property type="evidence" value="ECO:0007669"/>
    <property type="project" value="UniProtKB-SubCell"/>
</dbReference>
<dbReference type="GO" id="GO:0003942">
    <property type="term" value="F:N-acetyl-gamma-glutamyl-phosphate reductase activity"/>
    <property type="evidence" value="ECO:0007669"/>
    <property type="project" value="UniProtKB-UniRule"/>
</dbReference>
<dbReference type="GO" id="GO:0051287">
    <property type="term" value="F:NAD binding"/>
    <property type="evidence" value="ECO:0007669"/>
    <property type="project" value="InterPro"/>
</dbReference>
<dbReference type="GO" id="GO:0070401">
    <property type="term" value="F:NADP+ binding"/>
    <property type="evidence" value="ECO:0007669"/>
    <property type="project" value="InterPro"/>
</dbReference>
<dbReference type="GO" id="GO:0006526">
    <property type="term" value="P:L-arginine biosynthetic process"/>
    <property type="evidence" value="ECO:0007669"/>
    <property type="project" value="UniProtKB-UniRule"/>
</dbReference>
<dbReference type="CDD" id="cd23934">
    <property type="entry name" value="AGPR_1_C"/>
    <property type="match status" value="1"/>
</dbReference>
<dbReference type="CDD" id="cd17895">
    <property type="entry name" value="AGPR_1_N"/>
    <property type="match status" value="1"/>
</dbReference>
<dbReference type="FunFam" id="3.30.360.10:FF:000014">
    <property type="entry name" value="N-acetyl-gamma-glutamyl-phosphate reductase"/>
    <property type="match status" value="1"/>
</dbReference>
<dbReference type="FunFam" id="3.40.50.720:FF:000117">
    <property type="entry name" value="N-acetyl-gamma-glutamyl-phosphate reductase"/>
    <property type="match status" value="1"/>
</dbReference>
<dbReference type="Gene3D" id="3.30.360.10">
    <property type="entry name" value="Dihydrodipicolinate Reductase, domain 2"/>
    <property type="match status" value="1"/>
</dbReference>
<dbReference type="Gene3D" id="3.40.50.720">
    <property type="entry name" value="NAD(P)-binding Rossmann-like Domain"/>
    <property type="match status" value="1"/>
</dbReference>
<dbReference type="HAMAP" id="MF_00150">
    <property type="entry name" value="ArgC_type1"/>
    <property type="match status" value="1"/>
</dbReference>
<dbReference type="InterPro" id="IPR000706">
    <property type="entry name" value="AGPR_type-1"/>
</dbReference>
<dbReference type="InterPro" id="IPR036291">
    <property type="entry name" value="NAD(P)-bd_dom_sf"/>
</dbReference>
<dbReference type="InterPro" id="IPR050085">
    <property type="entry name" value="NAGSA_dehydrogenase"/>
</dbReference>
<dbReference type="InterPro" id="IPR000534">
    <property type="entry name" value="Semialdehyde_DH_NAD-bd"/>
</dbReference>
<dbReference type="NCBIfam" id="TIGR01850">
    <property type="entry name" value="argC"/>
    <property type="match status" value="1"/>
</dbReference>
<dbReference type="PANTHER" id="PTHR32338:SF10">
    <property type="entry name" value="N-ACETYL-GAMMA-GLUTAMYL-PHOSPHATE REDUCTASE, CHLOROPLASTIC-RELATED"/>
    <property type="match status" value="1"/>
</dbReference>
<dbReference type="PANTHER" id="PTHR32338">
    <property type="entry name" value="N-ACETYL-GAMMA-GLUTAMYL-PHOSPHATE REDUCTASE, CHLOROPLASTIC-RELATED-RELATED"/>
    <property type="match status" value="1"/>
</dbReference>
<dbReference type="Pfam" id="PF01118">
    <property type="entry name" value="Semialdhyde_dh"/>
    <property type="match status" value="1"/>
</dbReference>
<dbReference type="Pfam" id="PF22698">
    <property type="entry name" value="Semialdhyde_dhC_1"/>
    <property type="match status" value="1"/>
</dbReference>
<dbReference type="SMART" id="SM00859">
    <property type="entry name" value="Semialdhyde_dh"/>
    <property type="match status" value="1"/>
</dbReference>
<dbReference type="SUPFAM" id="SSF55347">
    <property type="entry name" value="Glyceraldehyde-3-phosphate dehydrogenase-like, C-terminal domain"/>
    <property type="match status" value="1"/>
</dbReference>
<dbReference type="SUPFAM" id="SSF51735">
    <property type="entry name" value="NAD(P)-binding Rossmann-fold domains"/>
    <property type="match status" value="1"/>
</dbReference>
<reference key="1">
    <citation type="journal article" date="2004" name="Nucleic Acids Res.">
        <title>The genome sequence of Bacillus cereus ATCC 10987 reveals metabolic adaptations and a large plasmid related to Bacillus anthracis pXO1.</title>
        <authorList>
            <person name="Rasko D.A."/>
            <person name="Ravel J."/>
            <person name="Oekstad O.A."/>
            <person name="Helgason E."/>
            <person name="Cer R.Z."/>
            <person name="Jiang L."/>
            <person name="Shores K.A."/>
            <person name="Fouts D.E."/>
            <person name="Tourasse N.J."/>
            <person name="Angiuoli S.V."/>
            <person name="Kolonay J.F."/>
            <person name="Nelson W.C."/>
            <person name="Kolstoe A.-B."/>
            <person name="Fraser C.M."/>
            <person name="Read T.D."/>
        </authorList>
    </citation>
    <scope>NUCLEOTIDE SEQUENCE [LARGE SCALE GENOMIC DNA]</scope>
    <source>
        <strain>ATCC 10987 / NRS 248</strain>
    </source>
</reference>
<accession>Q731G3</accession>
<feature type="chain" id="PRO_0000112379" description="N-acetyl-gamma-glutamyl-phosphate reductase">
    <location>
        <begin position="1"/>
        <end position="345"/>
    </location>
</feature>
<feature type="active site" evidence="1">
    <location>
        <position position="149"/>
    </location>
</feature>
<evidence type="ECO:0000255" key="1">
    <source>
        <dbReference type="HAMAP-Rule" id="MF_00150"/>
    </source>
</evidence>
<name>ARGC_BACC1</name>
<organism>
    <name type="scientific">Bacillus cereus (strain ATCC 10987 / NRS 248)</name>
    <dbReference type="NCBI Taxonomy" id="222523"/>
    <lineage>
        <taxon>Bacteria</taxon>
        <taxon>Bacillati</taxon>
        <taxon>Bacillota</taxon>
        <taxon>Bacilli</taxon>
        <taxon>Bacillales</taxon>
        <taxon>Bacillaceae</taxon>
        <taxon>Bacillus</taxon>
        <taxon>Bacillus cereus group</taxon>
    </lineage>
</organism>
<protein>
    <recommendedName>
        <fullName evidence="1">N-acetyl-gamma-glutamyl-phosphate reductase</fullName>
        <shortName evidence="1">AGPR</shortName>
        <ecNumber evidence="1">1.2.1.38</ecNumber>
    </recommendedName>
    <alternativeName>
        <fullName evidence="1">N-acetyl-glutamate semialdehyde dehydrogenase</fullName>
        <shortName evidence="1">NAGSA dehydrogenase</shortName>
    </alternativeName>
</protein>
<keyword id="KW-0028">Amino-acid biosynthesis</keyword>
<keyword id="KW-0055">Arginine biosynthesis</keyword>
<keyword id="KW-0963">Cytoplasm</keyword>
<keyword id="KW-0521">NADP</keyword>
<keyword id="KW-0560">Oxidoreductase</keyword>
<comment type="function">
    <text evidence="1">Catalyzes the NADPH-dependent reduction of N-acetyl-5-glutamyl phosphate to yield N-acetyl-L-glutamate 5-semialdehyde.</text>
</comment>
<comment type="catalytic activity">
    <reaction evidence="1">
        <text>N-acetyl-L-glutamate 5-semialdehyde + phosphate + NADP(+) = N-acetyl-L-glutamyl 5-phosphate + NADPH + H(+)</text>
        <dbReference type="Rhea" id="RHEA:21588"/>
        <dbReference type="ChEBI" id="CHEBI:15378"/>
        <dbReference type="ChEBI" id="CHEBI:29123"/>
        <dbReference type="ChEBI" id="CHEBI:43474"/>
        <dbReference type="ChEBI" id="CHEBI:57783"/>
        <dbReference type="ChEBI" id="CHEBI:57936"/>
        <dbReference type="ChEBI" id="CHEBI:58349"/>
        <dbReference type="EC" id="1.2.1.38"/>
    </reaction>
</comment>
<comment type="pathway">
    <text evidence="1">Amino-acid biosynthesis; L-arginine biosynthesis; N(2)-acetyl-L-ornithine from L-glutamate: step 3/4.</text>
</comment>
<comment type="subcellular location">
    <subcellularLocation>
        <location evidence="1">Cytoplasm</location>
    </subcellularLocation>
</comment>
<comment type="similarity">
    <text evidence="1">Belongs to the NAGSA dehydrogenase family. Type 1 subfamily.</text>
</comment>
<proteinExistence type="inferred from homology"/>
<gene>
    <name evidence="1" type="primary">argC</name>
    <name type="ordered locus">BCE_4203</name>
</gene>